<evidence type="ECO:0000255" key="1">
    <source>
        <dbReference type="HAMAP-Rule" id="MF_00332"/>
    </source>
</evidence>
<evidence type="ECO:0000256" key="2">
    <source>
        <dbReference type="SAM" id="MobiDB-lite"/>
    </source>
</evidence>
<comment type="function">
    <text evidence="1">Acts as a chaperone.</text>
</comment>
<comment type="induction">
    <text evidence="1">By stress conditions e.g. heat shock.</text>
</comment>
<comment type="similarity">
    <text evidence="1">Belongs to the heat shock protein 70 family.</text>
</comment>
<gene>
    <name evidence="1" type="primary">dnaK</name>
    <name type="ordered locus">RC1_2858</name>
</gene>
<dbReference type="EMBL" id="CP000613">
    <property type="protein sequence ID" value="ACJ00228.1"/>
    <property type="molecule type" value="Genomic_DNA"/>
</dbReference>
<dbReference type="RefSeq" id="WP_012568008.1">
    <property type="nucleotide sequence ID" value="NC_011420.2"/>
</dbReference>
<dbReference type="SMR" id="B6IVA4"/>
<dbReference type="STRING" id="414684.RC1_2858"/>
<dbReference type="KEGG" id="rce:RC1_2858"/>
<dbReference type="eggNOG" id="COG0443">
    <property type="taxonomic scope" value="Bacteria"/>
</dbReference>
<dbReference type="HOGENOM" id="CLU_005965_2_1_5"/>
<dbReference type="OrthoDB" id="9766019at2"/>
<dbReference type="Proteomes" id="UP000001591">
    <property type="component" value="Chromosome"/>
</dbReference>
<dbReference type="GO" id="GO:0005524">
    <property type="term" value="F:ATP binding"/>
    <property type="evidence" value="ECO:0007669"/>
    <property type="project" value="UniProtKB-UniRule"/>
</dbReference>
<dbReference type="GO" id="GO:0140662">
    <property type="term" value="F:ATP-dependent protein folding chaperone"/>
    <property type="evidence" value="ECO:0007669"/>
    <property type="project" value="InterPro"/>
</dbReference>
<dbReference type="GO" id="GO:0051082">
    <property type="term" value="F:unfolded protein binding"/>
    <property type="evidence" value="ECO:0007669"/>
    <property type="project" value="InterPro"/>
</dbReference>
<dbReference type="CDD" id="cd11733">
    <property type="entry name" value="ASKHA_NBD_HSP70_HSPA9"/>
    <property type="match status" value="1"/>
</dbReference>
<dbReference type="FunFam" id="2.60.34.10:FF:000014">
    <property type="entry name" value="Chaperone protein DnaK HSP70"/>
    <property type="match status" value="1"/>
</dbReference>
<dbReference type="FunFam" id="3.30.30.30:FF:000003">
    <property type="entry name" value="Heat shock protein 9"/>
    <property type="match status" value="1"/>
</dbReference>
<dbReference type="FunFam" id="1.20.1270.10:FF:000001">
    <property type="entry name" value="Molecular chaperone DnaK"/>
    <property type="match status" value="1"/>
</dbReference>
<dbReference type="FunFam" id="3.30.420.40:FF:000004">
    <property type="entry name" value="Molecular chaperone DnaK"/>
    <property type="match status" value="1"/>
</dbReference>
<dbReference type="FunFam" id="3.90.640.10:FF:000003">
    <property type="entry name" value="Molecular chaperone DnaK"/>
    <property type="match status" value="1"/>
</dbReference>
<dbReference type="Gene3D" id="1.20.1270.10">
    <property type="match status" value="1"/>
</dbReference>
<dbReference type="Gene3D" id="3.30.420.40">
    <property type="match status" value="2"/>
</dbReference>
<dbReference type="Gene3D" id="3.90.640.10">
    <property type="entry name" value="Actin, Chain A, domain 4"/>
    <property type="match status" value="1"/>
</dbReference>
<dbReference type="Gene3D" id="2.60.34.10">
    <property type="entry name" value="Substrate Binding Domain Of DNAk, Chain A, domain 1"/>
    <property type="match status" value="1"/>
</dbReference>
<dbReference type="HAMAP" id="MF_00332">
    <property type="entry name" value="DnaK"/>
    <property type="match status" value="1"/>
</dbReference>
<dbReference type="InterPro" id="IPR043129">
    <property type="entry name" value="ATPase_NBD"/>
</dbReference>
<dbReference type="InterPro" id="IPR012725">
    <property type="entry name" value="Chaperone_DnaK"/>
</dbReference>
<dbReference type="InterPro" id="IPR018181">
    <property type="entry name" value="Heat_shock_70_CS"/>
</dbReference>
<dbReference type="InterPro" id="IPR029048">
    <property type="entry name" value="HSP70_C_sf"/>
</dbReference>
<dbReference type="InterPro" id="IPR029047">
    <property type="entry name" value="HSP70_peptide-bd_sf"/>
</dbReference>
<dbReference type="InterPro" id="IPR013126">
    <property type="entry name" value="Hsp_70_fam"/>
</dbReference>
<dbReference type="NCBIfam" id="NF001413">
    <property type="entry name" value="PRK00290.1"/>
    <property type="match status" value="1"/>
</dbReference>
<dbReference type="NCBIfam" id="NF003520">
    <property type="entry name" value="PRK05183.1"/>
    <property type="match status" value="1"/>
</dbReference>
<dbReference type="NCBIfam" id="TIGR02350">
    <property type="entry name" value="prok_dnaK"/>
    <property type="match status" value="1"/>
</dbReference>
<dbReference type="PANTHER" id="PTHR19375">
    <property type="entry name" value="HEAT SHOCK PROTEIN 70KDA"/>
    <property type="match status" value="1"/>
</dbReference>
<dbReference type="Pfam" id="PF00012">
    <property type="entry name" value="HSP70"/>
    <property type="match status" value="1"/>
</dbReference>
<dbReference type="PRINTS" id="PR00301">
    <property type="entry name" value="HEATSHOCK70"/>
</dbReference>
<dbReference type="SUPFAM" id="SSF53067">
    <property type="entry name" value="Actin-like ATPase domain"/>
    <property type="match status" value="2"/>
</dbReference>
<dbReference type="SUPFAM" id="SSF100934">
    <property type="entry name" value="Heat shock protein 70kD (HSP70), C-terminal subdomain"/>
    <property type="match status" value="1"/>
</dbReference>
<dbReference type="SUPFAM" id="SSF100920">
    <property type="entry name" value="Heat shock protein 70kD (HSP70), peptide-binding domain"/>
    <property type="match status" value="1"/>
</dbReference>
<dbReference type="PROSITE" id="PS00297">
    <property type="entry name" value="HSP70_1"/>
    <property type="match status" value="1"/>
</dbReference>
<dbReference type="PROSITE" id="PS00329">
    <property type="entry name" value="HSP70_2"/>
    <property type="match status" value="1"/>
</dbReference>
<dbReference type="PROSITE" id="PS01036">
    <property type="entry name" value="HSP70_3"/>
    <property type="match status" value="1"/>
</dbReference>
<reference key="1">
    <citation type="submission" date="2007-03" db="EMBL/GenBank/DDBJ databases">
        <title>Genome sequence of Rhodospirillum centenum.</title>
        <authorList>
            <person name="Touchman J.W."/>
            <person name="Bauer C."/>
            <person name="Blankenship R.E."/>
        </authorList>
    </citation>
    <scope>NUCLEOTIDE SEQUENCE [LARGE SCALE GENOMIC DNA]</scope>
    <source>
        <strain>ATCC 51521 / SW</strain>
    </source>
</reference>
<proteinExistence type="inferred from homology"/>
<protein>
    <recommendedName>
        <fullName evidence="1">Chaperone protein DnaK</fullName>
    </recommendedName>
    <alternativeName>
        <fullName evidence="1">HSP70</fullName>
    </alternativeName>
    <alternativeName>
        <fullName evidence="1">Heat shock 70 kDa protein</fullName>
    </alternativeName>
    <alternativeName>
        <fullName evidence="1">Heat shock protein 70</fullName>
    </alternativeName>
</protein>
<organism>
    <name type="scientific">Rhodospirillum centenum (strain ATCC 51521 / SW)</name>
    <dbReference type="NCBI Taxonomy" id="414684"/>
    <lineage>
        <taxon>Bacteria</taxon>
        <taxon>Pseudomonadati</taxon>
        <taxon>Pseudomonadota</taxon>
        <taxon>Alphaproteobacteria</taxon>
        <taxon>Rhodospirillales</taxon>
        <taxon>Rhodospirillaceae</taxon>
        <taxon>Rhodospirillum</taxon>
    </lineage>
</organism>
<keyword id="KW-0067">ATP-binding</keyword>
<keyword id="KW-0143">Chaperone</keyword>
<keyword id="KW-0547">Nucleotide-binding</keyword>
<keyword id="KW-0597">Phosphoprotein</keyword>
<keyword id="KW-1185">Reference proteome</keyword>
<keyword id="KW-0346">Stress response</keyword>
<name>DNAK_RHOCS</name>
<feature type="chain" id="PRO_1000119747" description="Chaperone protein DnaK">
    <location>
        <begin position="1"/>
        <end position="640"/>
    </location>
</feature>
<feature type="region of interest" description="Disordered" evidence="2">
    <location>
        <begin position="600"/>
        <end position="640"/>
    </location>
</feature>
<feature type="compositionally biased region" description="Gly residues" evidence="2">
    <location>
        <begin position="603"/>
        <end position="614"/>
    </location>
</feature>
<feature type="modified residue" description="Phosphothreonine; by autocatalysis" evidence="1">
    <location>
        <position position="198"/>
    </location>
</feature>
<sequence length="640" mass="68509">MSKVIGIDLGTTNSCVAIMEGTQAKVIENAEGARTTPSMVAFTQGGERLVGQPAKRQAVTNPENTFFAIKRLIGRRYDDPLTQKDKGLVPYRIVGGKNGDAWVESHGKQYSPSEISAFILQKMKETAENYLGEKVTQAVITVPAYFNDSQRQATKDAGKIAGLEVLRIINEPTAAALAYGMEKKGTGTIAVYDLGGGTFDISVLEIGDGVFEVKSTNGDTFLGGEDFDAKIIDYLAEEFQKEQGIDLRKDRLALQRLKEAAEKAKIELSASMQTEVNLPFITADASGPKHLNIKLTRSKLEALVDDLVRRTIEPCKAALKDAGLKASEIDEVILVGGMTRMPKIIETVKQFFGREPHRGVNPDEVVAVGAAIQGGVLKGEVKDVLLLDVTPLSLGIETLGGVFTRLIDRNTTIPTKKSQVFSTAEDNQTAVTIRVFQGEREMAADNKMLGQFDLMGIPSAPRGVPQIEVTFDIDANGIVNVSAKDKATGKEQTIRIQASGGLSDADIDRMVKDAEAHAAEDKKRRELVEARNQADGLIHTTERTLSENGDKLPGAEKSAAEAAIAELRTAMAADDVADIKAKTDALAQASMKLGEALYKAGQETGGPGAPGGDSGASEAGGEKVVDADFEEVDDDRKKSA</sequence>
<accession>B6IVA4</accession>